<evidence type="ECO:0000305" key="1"/>
<organism>
    <name type="scientific">Aquifex aeolicus (strain VF5)</name>
    <dbReference type="NCBI Taxonomy" id="224324"/>
    <lineage>
        <taxon>Bacteria</taxon>
        <taxon>Pseudomonadati</taxon>
        <taxon>Aquificota</taxon>
        <taxon>Aquificia</taxon>
        <taxon>Aquificales</taxon>
        <taxon>Aquificaceae</taxon>
        <taxon>Aquifex</taxon>
    </lineage>
</organism>
<proteinExistence type="inferred from homology"/>
<feature type="chain" id="PRO_0000134373" description="MEMO1 family protein aq_1336">
    <location>
        <begin position="1"/>
        <end position="374"/>
    </location>
</feature>
<sequence>MKPKVRFFDLQPYGDKFVVRDPVGISQPFIATPELLFLLSLMDGTRDITDLQAEFFKKTGHLIPKEEINQVINFLDENYLLYNERFLNKLKEEREKILKKGYREPSHAGQAYPENPQELKNFIEETVNKNSEKFKARGILVPHMDLRVASGVYGSVYSAIKENEYDTVVLLGVSHYFHETPFSVLPLDLRTPLGDLKVDIERVEELQKMFDYDLSHDVLAYKNEHSIEFQTIFLKYLFPEVKVIPAIVSYGDTKSLKEIAHKITKVLEDSQNPLIISSVDFSHVGRKFGDPHSYDPSPRDREYINLLAELKNEEAFNLLQSDNNRTRIDGQFTNFVFLEILKNLGVKEGKLLDYDVYHEAPTDSKVSYAGMVFY</sequence>
<comment type="similarity">
    <text evidence="1">Belongs to the MEMO1 family.</text>
</comment>
<gene>
    <name type="ordered locus">aq_1336</name>
</gene>
<protein>
    <recommendedName>
        <fullName>MEMO1 family protein aq_1336</fullName>
    </recommendedName>
</protein>
<reference key="1">
    <citation type="journal article" date="1998" name="Nature">
        <title>The complete genome of the hyperthermophilic bacterium Aquifex aeolicus.</title>
        <authorList>
            <person name="Deckert G."/>
            <person name="Warren P.V."/>
            <person name="Gaasterland T."/>
            <person name="Young W.G."/>
            <person name="Lenox A.L."/>
            <person name="Graham D.E."/>
            <person name="Overbeek R."/>
            <person name="Snead M.A."/>
            <person name="Keller M."/>
            <person name="Aujay M."/>
            <person name="Huber R."/>
            <person name="Feldman R.A."/>
            <person name="Short J.M."/>
            <person name="Olsen G.J."/>
            <person name="Swanson R.V."/>
        </authorList>
    </citation>
    <scope>NUCLEOTIDE SEQUENCE [LARGE SCALE GENOMIC DNA]</scope>
    <source>
        <strain>VF5</strain>
    </source>
</reference>
<accession>O67355</accession>
<name>Y1336_AQUAE</name>
<keyword id="KW-1185">Reference proteome</keyword>
<dbReference type="EMBL" id="AE000657">
    <property type="protein sequence ID" value="AAC07322.1"/>
    <property type="molecule type" value="Genomic_DNA"/>
</dbReference>
<dbReference type="PIR" id="H70415">
    <property type="entry name" value="H70415"/>
</dbReference>
<dbReference type="RefSeq" id="NP_213919.1">
    <property type="nucleotide sequence ID" value="NC_000918.1"/>
</dbReference>
<dbReference type="RefSeq" id="WP_010880857.1">
    <property type="nucleotide sequence ID" value="NC_000918.1"/>
</dbReference>
<dbReference type="SMR" id="O67355"/>
<dbReference type="STRING" id="224324.aq_1336"/>
<dbReference type="EnsemblBacteria" id="AAC07322">
    <property type="protein sequence ID" value="AAC07322"/>
    <property type="gene ID" value="aq_1336"/>
</dbReference>
<dbReference type="KEGG" id="aae:aq_1336"/>
<dbReference type="eggNOG" id="COG1355">
    <property type="taxonomic scope" value="Bacteria"/>
</dbReference>
<dbReference type="HOGENOM" id="CLU_055281_0_0_0"/>
<dbReference type="InParanoid" id="O67355"/>
<dbReference type="OrthoDB" id="9771412at2"/>
<dbReference type="Proteomes" id="UP000000798">
    <property type="component" value="Chromosome"/>
</dbReference>
<dbReference type="CDD" id="cd07361">
    <property type="entry name" value="MEMO_like"/>
    <property type="match status" value="1"/>
</dbReference>
<dbReference type="Gene3D" id="3.40.830.10">
    <property type="entry name" value="LigB-like"/>
    <property type="match status" value="1"/>
</dbReference>
<dbReference type="InterPro" id="IPR002737">
    <property type="entry name" value="MEMO1_fam"/>
</dbReference>
<dbReference type="NCBIfam" id="TIGR04336">
    <property type="entry name" value="AmmeMemoSam_B"/>
    <property type="match status" value="1"/>
</dbReference>
<dbReference type="PANTHER" id="PTHR11060">
    <property type="entry name" value="PROTEIN MEMO1"/>
    <property type="match status" value="1"/>
</dbReference>
<dbReference type="PANTHER" id="PTHR11060:SF0">
    <property type="entry name" value="PROTEIN MEMO1"/>
    <property type="match status" value="1"/>
</dbReference>
<dbReference type="Pfam" id="PF01875">
    <property type="entry name" value="Memo"/>
    <property type="match status" value="1"/>
</dbReference>